<reference key="1">
    <citation type="submission" date="2007-02" db="EMBL/GenBank/DDBJ databases">
        <title>Complete sequence of chromosome 1 of Rhodobacter sphaeroides ATCC 17029.</title>
        <authorList>
            <person name="Copeland A."/>
            <person name="Lucas S."/>
            <person name="Lapidus A."/>
            <person name="Barry K."/>
            <person name="Detter J.C."/>
            <person name="Glavina del Rio T."/>
            <person name="Hammon N."/>
            <person name="Israni S."/>
            <person name="Dalin E."/>
            <person name="Tice H."/>
            <person name="Pitluck S."/>
            <person name="Kiss H."/>
            <person name="Brettin T."/>
            <person name="Bruce D."/>
            <person name="Han C."/>
            <person name="Tapia R."/>
            <person name="Gilna P."/>
            <person name="Schmutz J."/>
            <person name="Larimer F."/>
            <person name="Land M."/>
            <person name="Hauser L."/>
            <person name="Kyrpides N."/>
            <person name="Mikhailova N."/>
            <person name="Richardson P."/>
            <person name="Mackenzie C."/>
            <person name="Choudhary M."/>
            <person name="Donohue T.J."/>
            <person name="Kaplan S."/>
        </authorList>
    </citation>
    <scope>NUCLEOTIDE SEQUENCE [LARGE SCALE GENOMIC DNA]</scope>
    <source>
        <strain>ATCC 17029 / ATH 2.4.9</strain>
    </source>
</reference>
<feature type="chain" id="PRO_0000325218" description="Isopentenyl-diphosphate Delta-isomerase">
    <location>
        <begin position="1"/>
        <end position="177"/>
    </location>
</feature>
<feature type="domain" description="Nudix hydrolase">
    <location>
        <begin position="26"/>
        <end position="160"/>
    </location>
</feature>
<feature type="active site" evidence="1">
    <location>
        <position position="62"/>
    </location>
</feature>
<feature type="active site" evidence="1">
    <location>
        <position position="110"/>
    </location>
</feature>
<feature type="binding site" evidence="1">
    <location>
        <position position="22"/>
    </location>
    <ligand>
        <name>Mn(2+)</name>
        <dbReference type="ChEBI" id="CHEBI:29035"/>
    </ligand>
</feature>
<feature type="binding site" evidence="1">
    <location>
        <position position="28"/>
    </location>
    <ligand>
        <name>Mn(2+)</name>
        <dbReference type="ChEBI" id="CHEBI:29035"/>
    </ligand>
</feature>
<feature type="binding site" evidence="1">
    <location>
        <position position="64"/>
    </location>
    <ligand>
        <name>Mn(2+)</name>
        <dbReference type="ChEBI" id="CHEBI:29035"/>
    </ligand>
</feature>
<feature type="binding site" evidence="1">
    <location>
        <position position="82"/>
    </location>
    <ligand>
        <name>Mg(2+)</name>
        <dbReference type="ChEBI" id="CHEBI:18420"/>
    </ligand>
</feature>
<feature type="binding site" evidence="1">
    <location>
        <position position="108"/>
    </location>
    <ligand>
        <name>Mn(2+)</name>
        <dbReference type="ChEBI" id="CHEBI:29035"/>
    </ligand>
</feature>
<feature type="binding site" evidence="1">
    <location>
        <position position="110"/>
    </location>
    <ligand>
        <name>Mn(2+)</name>
        <dbReference type="ChEBI" id="CHEBI:29035"/>
    </ligand>
</feature>
<gene>
    <name evidence="1" type="primary">idi</name>
    <name type="ordered locus">Rsph17029_1919</name>
</gene>
<organism>
    <name type="scientific">Cereibacter sphaeroides (strain ATCC 17029 / ATH 2.4.9)</name>
    <name type="common">Rhodobacter sphaeroides</name>
    <dbReference type="NCBI Taxonomy" id="349101"/>
    <lineage>
        <taxon>Bacteria</taxon>
        <taxon>Pseudomonadati</taxon>
        <taxon>Pseudomonadota</taxon>
        <taxon>Alphaproteobacteria</taxon>
        <taxon>Rhodobacterales</taxon>
        <taxon>Paracoccaceae</taxon>
        <taxon>Cereibacter</taxon>
    </lineage>
</organism>
<sequence>MTEMVPAWVEGRLMPVEKLEAHQRGLRHMAISVFVMAGEAVLIQRRAAGKYHTPGLWANTCCTHPRWGEEAADCAVRRLREELGITGLVTVFADRVEYRADVGNGLTEHEVVDIFVAEAPSDLPVNPDPEEVWETRWVDLTDLAREVKEHPERFTPWLRIYLAEHMERIFGKLRVVQ</sequence>
<name>IDI_CERS1</name>
<evidence type="ECO:0000255" key="1">
    <source>
        <dbReference type="HAMAP-Rule" id="MF_00202"/>
    </source>
</evidence>
<evidence type="ECO:0000305" key="2"/>
<accession>A3PL07</accession>
<comment type="function">
    <text evidence="1">Catalyzes the 1,3-allylic rearrangement of the homoallylic substrate isopentenyl (IPP) to its highly electrophilic allylic isomer, dimethylallyl diphosphate (DMAPP).</text>
</comment>
<comment type="catalytic activity">
    <reaction evidence="1">
        <text>isopentenyl diphosphate = dimethylallyl diphosphate</text>
        <dbReference type="Rhea" id="RHEA:23284"/>
        <dbReference type="ChEBI" id="CHEBI:57623"/>
        <dbReference type="ChEBI" id="CHEBI:128769"/>
        <dbReference type="EC" id="5.3.3.2"/>
    </reaction>
</comment>
<comment type="cofactor">
    <cofactor evidence="1">
        <name>Mg(2+)</name>
        <dbReference type="ChEBI" id="CHEBI:18420"/>
    </cofactor>
    <text evidence="1">Binds 1 Mg(2+) ion per subunit. The magnesium ion binds only when substrate is bound.</text>
</comment>
<comment type="cofactor">
    <cofactor evidence="1">
        <name>Mn(2+)</name>
        <dbReference type="ChEBI" id="CHEBI:29035"/>
    </cofactor>
    <text evidence="1">Binds 1 Mn(2+) ion per subunit.</text>
</comment>
<comment type="pathway">
    <text evidence="1">Isoprenoid biosynthesis; dimethylallyl diphosphate biosynthesis; dimethylallyl diphosphate from isopentenyl diphosphate: step 1/1.</text>
</comment>
<comment type="pathway">
    <text evidence="1">Porphyrin-containing compound metabolism; chlorophyll biosynthesis.</text>
</comment>
<comment type="subcellular location">
    <subcellularLocation>
        <location evidence="1">Cytoplasm</location>
    </subcellularLocation>
</comment>
<comment type="similarity">
    <text evidence="1">Belongs to the IPP isomerase type 1 family.</text>
</comment>
<comment type="sequence caution" evidence="2">
    <conflict type="erroneous initiation">
        <sequence resource="EMBL-CDS" id="ABN77023"/>
    </conflict>
</comment>
<keyword id="KW-0149">Chlorophyll biosynthesis</keyword>
<keyword id="KW-0963">Cytoplasm</keyword>
<keyword id="KW-0413">Isomerase</keyword>
<keyword id="KW-0414">Isoprene biosynthesis</keyword>
<keyword id="KW-0460">Magnesium</keyword>
<keyword id="KW-0464">Manganese</keyword>
<keyword id="KW-0479">Metal-binding</keyword>
<keyword id="KW-0602">Photosynthesis</keyword>
<dbReference type="EC" id="5.3.3.2" evidence="1"/>
<dbReference type="EMBL" id="CP000577">
    <property type="protein sequence ID" value="ABN77023.1"/>
    <property type="status" value="ALT_INIT"/>
    <property type="molecule type" value="Genomic_DNA"/>
</dbReference>
<dbReference type="RefSeq" id="WP_011338119.1">
    <property type="nucleotide sequence ID" value="NC_009049.1"/>
</dbReference>
<dbReference type="SMR" id="A3PL07"/>
<dbReference type="GeneID" id="3719285"/>
<dbReference type="KEGG" id="rsh:Rsph17029_1919"/>
<dbReference type="HOGENOM" id="CLU_060552_2_1_5"/>
<dbReference type="UniPathway" id="UPA00059">
    <property type="reaction ID" value="UER00104"/>
</dbReference>
<dbReference type="UniPathway" id="UPA00668"/>
<dbReference type="GO" id="GO:0005737">
    <property type="term" value="C:cytoplasm"/>
    <property type="evidence" value="ECO:0007669"/>
    <property type="project" value="UniProtKB-SubCell"/>
</dbReference>
<dbReference type="GO" id="GO:0004452">
    <property type="term" value="F:isopentenyl-diphosphate delta-isomerase activity"/>
    <property type="evidence" value="ECO:0007669"/>
    <property type="project" value="UniProtKB-UniRule"/>
</dbReference>
<dbReference type="GO" id="GO:0046872">
    <property type="term" value="F:metal ion binding"/>
    <property type="evidence" value="ECO:0007669"/>
    <property type="project" value="UniProtKB-KW"/>
</dbReference>
<dbReference type="GO" id="GO:0015995">
    <property type="term" value="P:chlorophyll biosynthetic process"/>
    <property type="evidence" value="ECO:0007669"/>
    <property type="project" value="UniProtKB-UniPathway"/>
</dbReference>
<dbReference type="GO" id="GO:0050992">
    <property type="term" value="P:dimethylallyl diphosphate biosynthetic process"/>
    <property type="evidence" value="ECO:0007669"/>
    <property type="project" value="UniProtKB-UniRule"/>
</dbReference>
<dbReference type="GO" id="GO:0009240">
    <property type="term" value="P:isopentenyl diphosphate biosynthetic process"/>
    <property type="evidence" value="ECO:0007669"/>
    <property type="project" value="TreeGrafter"/>
</dbReference>
<dbReference type="GO" id="GO:0015979">
    <property type="term" value="P:photosynthesis"/>
    <property type="evidence" value="ECO:0007669"/>
    <property type="project" value="UniProtKB-KW"/>
</dbReference>
<dbReference type="CDD" id="cd02885">
    <property type="entry name" value="NUDIX_IPP_Isomerase"/>
    <property type="match status" value="1"/>
</dbReference>
<dbReference type="Gene3D" id="3.90.79.10">
    <property type="entry name" value="Nucleoside Triphosphate Pyrophosphohydrolase"/>
    <property type="match status" value="1"/>
</dbReference>
<dbReference type="HAMAP" id="MF_00202">
    <property type="entry name" value="Idi"/>
    <property type="match status" value="1"/>
</dbReference>
<dbReference type="InterPro" id="IPR056375">
    <property type="entry name" value="Idi_bact"/>
</dbReference>
<dbReference type="InterPro" id="IPR011876">
    <property type="entry name" value="IsopentenylPP_isomerase_typ1"/>
</dbReference>
<dbReference type="InterPro" id="IPR015797">
    <property type="entry name" value="NUDIX_hydrolase-like_dom_sf"/>
</dbReference>
<dbReference type="InterPro" id="IPR000086">
    <property type="entry name" value="NUDIX_hydrolase_dom"/>
</dbReference>
<dbReference type="NCBIfam" id="TIGR02150">
    <property type="entry name" value="IPP_isom_1"/>
    <property type="match status" value="1"/>
</dbReference>
<dbReference type="NCBIfam" id="NF002995">
    <property type="entry name" value="PRK03759.1"/>
    <property type="match status" value="1"/>
</dbReference>
<dbReference type="PANTHER" id="PTHR10885">
    <property type="entry name" value="ISOPENTENYL-DIPHOSPHATE DELTA-ISOMERASE"/>
    <property type="match status" value="1"/>
</dbReference>
<dbReference type="PANTHER" id="PTHR10885:SF0">
    <property type="entry name" value="ISOPENTENYL-DIPHOSPHATE DELTA-ISOMERASE"/>
    <property type="match status" value="1"/>
</dbReference>
<dbReference type="Pfam" id="PF00293">
    <property type="entry name" value="NUDIX"/>
    <property type="match status" value="1"/>
</dbReference>
<dbReference type="PIRSF" id="PIRSF018427">
    <property type="entry name" value="Isopntndiph_ism"/>
    <property type="match status" value="1"/>
</dbReference>
<dbReference type="SUPFAM" id="SSF55811">
    <property type="entry name" value="Nudix"/>
    <property type="match status" value="1"/>
</dbReference>
<dbReference type="PROSITE" id="PS51462">
    <property type="entry name" value="NUDIX"/>
    <property type="match status" value="1"/>
</dbReference>
<proteinExistence type="inferred from homology"/>
<protein>
    <recommendedName>
        <fullName evidence="1">Isopentenyl-diphosphate Delta-isomerase</fullName>
        <shortName evidence="1">IPP isomerase</shortName>
        <ecNumber evidence="1">5.3.3.2</ecNumber>
    </recommendedName>
    <alternativeName>
        <fullName evidence="1">IPP:DMAPP isomerase</fullName>
    </alternativeName>
    <alternativeName>
        <fullName evidence="1">Isopentenyl pyrophosphate isomerase</fullName>
    </alternativeName>
</protein>